<dbReference type="EMBL" id="AY621306">
    <property type="protein sequence ID" value="AAT45544.1"/>
    <property type="molecule type" value="mRNA"/>
</dbReference>
<dbReference type="EMBL" id="AY621319">
    <property type="protein sequence ID" value="AAT48928.1"/>
    <property type="molecule type" value="Genomic_DNA"/>
</dbReference>
<dbReference type="EMBL" id="AY534895">
    <property type="protein sequence ID" value="AAS99318.1"/>
    <property type="molecule type" value="mRNA"/>
</dbReference>
<dbReference type="EMBL" id="DQ677635">
    <property type="protein sequence ID" value="ABG73369.1"/>
    <property type="molecule type" value="mRNA"/>
</dbReference>
<dbReference type="EMBL" id="DQ858301">
    <property type="protein sequence ID" value="ABI48217.1"/>
    <property type="molecule type" value="mRNA"/>
</dbReference>
<dbReference type="EMBL" id="DQ858314">
    <property type="protein sequence ID" value="ABI48230.1"/>
    <property type="molecule type" value="mRNA"/>
</dbReference>
<dbReference type="EMBL" id="DQ858327">
    <property type="protein sequence ID" value="ABI48243.1"/>
    <property type="molecule type" value="mRNA"/>
</dbReference>
<dbReference type="EMBL" id="DQ858341">
    <property type="protein sequence ID" value="ABI48257.1"/>
    <property type="molecule type" value="mRNA"/>
</dbReference>
<dbReference type="EMBL" id="DQ673442">
    <property type="protein sequence ID" value="ABG66308.1"/>
    <property type="molecule type" value="mRNA"/>
</dbReference>
<dbReference type="RefSeq" id="NP_001001610.1">
    <property type="nucleotide sequence ID" value="NM_001001610.2"/>
</dbReference>
<dbReference type="SMR" id="Q6GXJ1"/>
<dbReference type="STRING" id="9031.ENSGALP00000035922"/>
<dbReference type="PaxDb" id="9031-ENSGALP00000035922"/>
<dbReference type="GeneID" id="414342"/>
<dbReference type="KEGG" id="gga:414342"/>
<dbReference type="CTD" id="414342"/>
<dbReference type="VEuPathDB" id="HostDB:geneid_414342"/>
<dbReference type="HOGENOM" id="CLU_2903560_0_0_1"/>
<dbReference type="InParanoid" id="Q6GXJ1"/>
<dbReference type="OrthoDB" id="9237895at2759"/>
<dbReference type="Reactome" id="R-GGA-1461957">
    <property type="pathway name" value="Beta defensins"/>
</dbReference>
<dbReference type="Reactome" id="R-GGA-1461973">
    <property type="pathway name" value="Defensins"/>
</dbReference>
<dbReference type="PRO" id="PR:Q6GXJ1"/>
<dbReference type="Proteomes" id="UP000000539">
    <property type="component" value="Chromosome 3"/>
</dbReference>
<dbReference type="Bgee" id="ENSGALG00000019843">
    <property type="expression patterns" value="Expressed in granulocyte and 5 other cell types or tissues"/>
</dbReference>
<dbReference type="GO" id="GO:0005615">
    <property type="term" value="C:extracellular space"/>
    <property type="evidence" value="ECO:0000318"/>
    <property type="project" value="GO_Central"/>
</dbReference>
<dbReference type="GO" id="GO:0031731">
    <property type="term" value="F:CCR6 chemokine receptor binding"/>
    <property type="evidence" value="ECO:0000318"/>
    <property type="project" value="GO_Central"/>
</dbReference>
<dbReference type="GO" id="GO:0042056">
    <property type="term" value="F:chemoattractant activity"/>
    <property type="evidence" value="ECO:0000318"/>
    <property type="project" value="GO_Central"/>
</dbReference>
<dbReference type="GO" id="GO:0060326">
    <property type="term" value="P:cell chemotaxis"/>
    <property type="evidence" value="ECO:0000318"/>
    <property type="project" value="GO_Central"/>
</dbReference>
<dbReference type="GO" id="GO:0042742">
    <property type="term" value="P:defense response to bacterium"/>
    <property type="evidence" value="ECO:0000318"/>
    <property type="project" value="GO_Central"/>
</dbReference>
<dbReference type="GO" id="GO:0050832">
    <property type="term" value="P:defense response to fungus"/>
    <property type="evidence" value="ECO:0000314"/>
    <property type="project" value="AgBase"/>
</dbReference>
<dbReference type="GO" id="GO:0050829">
    <property type="term" value="P:defense response to Gram-negative bacterium"/>
    <property type="evidence" value="ECO:0000314"/>
    <property type="project" value="AgBase"/>
</dbReference>
<dbReference type="GO" id="GO:0050830">
    <property type="term" value="P:defense response to Gram-positive bacterium"/>
    <property type="evidence" value="ECO:0000314"/>
    <property type="project" value="AgBase"/>
</dbReference>
<dbReference type="SUPFAM" id="SSF57392">
    <property type="entry name" value="Defensin-like"/>
    <property type="match status" value="1"/>
</dbReference>
<feature type="signal peptide" evidence="2">
    <location>
        <begin position="1"/>
        <end position="19"/>
    </location>
</feature>
<feature type="propeptide" id="PRO_0000288560" evidence="1">
    <location>
        <begin position="20"/>
        <end position="25"/>
    </location>
</feature>
<feature type="chain" id="PRO_0000288561" description="Gallinacin-4">
    <location>
        <begin position="26"/>
        <end position="63"/>
    </location>
</feature>
<feature type="disulfide bond" evidence="1">
    <location>
        <begin position="31"/>
        <end position="59"/>
    </location>
</feature>
<feature type="disulfide bond" evidence="1">
    <location>
        <begin position="38"/>
        <end position="53"/>
    </location>
</feature>
<feature type="disulfide bond" evidence="1">
    <location>
        <begin position="43"/>
        <end position="60"/>
    </location>
</feature>
<feature type="sequence variant" description="In strain: Guangxi Huang." evidence="3 4 7">
    <original>H</original>
    <variation>Y</variation>
    <location>
        <position position="45"/>
    </location>
</feature>
<comment type="function">
    <text evidence="6">Has bactericidal activity. Potent activity against S.typhimurium and S.entiriditis.</text>
</comment>
<comment type="subcellular location">
    <subcellularLocation>
        <location>Secreted</location>
    </subcellularLocation>
    <subcellularLocation>
        <location evidence="1">Cytoplasmic granule</location>
    </subcellularLocation>
</comment>
<comment type="tissue specificity">
    <text evidence="3 4 5 6">Strong expression in the bone marrow and testis. Widely expressed. Weak expression in the ovarian stroma, but not expressed in the ovarian follicles.</text>
</comment>
<comment type="similarity">
    <text evidence="8">Belongs to the beta-defensin family.</text>
</comment>
<sequence>MKILCFFIVLLFVAVHGAVGFSRSPRYHMQCGYRGTFCTPGKCPHGNAYLGLCRPKYSCCRWL</sequence>
<proteinExistence type="evidence at transcript level"/>
<protein>
    <recommendedName>
        <fullName>Gallinacin-4</fullName>
        <shortName>Gal-4</shortName>
    </recommendedName>
    <alternativeName>
        <fullName>Beta-defensin 4</fullName>
    </alternativeName>
    <alternativeName>
        <fullName>Gallinacin-7</fullName>
        <shortName>Gal-7</shortName>
    </alternativeName>
</protein>
<gene>
    <name type="primary">GAL4</name>
</gene>
<reference key="1">
    <citation type="journal article" date="2004" name="BMC Genomics">
        <title>A genome-wide screen identifies a single beta-defensin gene cluster in the chicken: implications for the origin and evolution of mammalian defensins.</title>
        <authorList>
            <person name="Xiao Y."/>
            <person name="Hughes A.L."/>
            <person name="Ando J."/>
            <person name="Matsuda Y."/>
            <person name="Cheng J.-F."/>
            <person name="Skinner-Noble D."/>
            <person name="Zhang G."/>
        </authorList>
    </citation>
    <scope>NUCLEOTIDE SEQUENCE [GENOMIC DNA / MRNA]</scope>
    <scope>VARIANT TYR-45</scope>
    <scope>TISSUE SPECIFICITY</scope>
</reference>
<reference key="2">
    <citation type="journal article" date="2004" name="Immunogenetics">
        <title>Bioinformatic discovery and initial characterisation of nine novel antimicrobial peptide genes in the chicken.</title>
        <authorList>
            <person name="Lynn D.J."/>
            <person name="Higgs R."/>
            <person name="Gaines S."/>
            <person name="Tierney J."/>
            <person name="James T."/>
            <person name="Lloyd A.T."/>
            <person name="Fares M.A."/>
            <person name="Mulcahy G."/>
            <person name="O'Farrelly C."/>
        </authorList>
    </citation>
    <scope>NUCLEOTIDE SEQUENCE [MRNA]</scope>
    <scope>VARIANT TYR-45</scope>
    <scope>TISSUE SPECIFICITY</scope>
    <source>
        <tissue>Bone marrow</tissue>
    </source>
</reference>
<reference key="3">
    <citation type="submission" date="2006-07" db="EMBL/GenBank/DDBJ databases">
        <title>Chicken beta-defensin in China chicken breeds.</title>
        <authorList>
            <person name="Chen Y."/>
            <person name="Cao Y."/>
            <person name="Xie Q."/>
            <person name="Bi Y."/>
            <person name="Chen J."/>
        </authorList>
    </citation>
    <scope>NUCLEOTIDE SEQUENCE [MRNA]</scope>
    <scope>VARIANT TYR-45</scope>
    <source>
        <strain>Guangxi Huang</strain>
        <strain>Huiyang bearded</strain>
        <strain>Qingyuan Ma</strain>
        <strain>Taihe silkies</strain>
        <strain>Xinghua</strain>
    </source>
</reference>
<reference key="4">
    <citation type="submission" date="2006-06" db="EMBL/GenBank/DDBJ databases">
        <title>Cloning and structure analysis of silky fowl beta-defensin gene.</title>
        <authorList>
            <person name="Kang X."/>
            <person name="Shi J."/>
            <person name="Sun G."/>
            <person name="Han R."/>
            <person name="Tian Y."/>
            <person name="Chen Q."/>
        </authorList>
    </citation>
    <scope>NUCLEOTIDE SEQUENCE [MRNA] OF 26-63</scope>
    <source>
        <tissue>Bone marrow</tissue>
    </source>
</reference>
<reference key="5">
    <citation type="journal article" date="2007" name="Biochem. Biophys. Res. Commun.">
        <title>The chicken host peptides, gallinacins 4, 7, and 9 have antimicrobial activity against Salmonella serovars.</title>
        <authorList>
            <person name="Milona P."/>
            <person name="Townes C.L."/>
            <person name="Bevan R.M."/>
            <person name="Hall J."/>
        </authorList>
    </citation>
    <scope>FUNCTION</scope>
    <scope>TISSUE SPECIFICITY</scope>
</reference>
<reference key="6">
    <citation type="journal article" date="2007" name="Reproduction">
        <title>Changes in the expression of gallinacins, antimicrobial peptides, in ovarian follicles during follicular growth and in response to lipopolysaccharide in laying hens (Gallus domesticus).</title>
        <authorList>
            <person name="Subedi K."/>
            <person name="Isobe N."/>
            <person name="Nishibori M."/>
            <person name="Yoshimura Y."/>
        </authorList>
    </citation>
    <scope>TISSUE SPECIFICITY</scope>
</reference>
<name>GLL4_CHICK</name>
<organism>
    <name type="scientific">Gallus gallus</name>
    <name type="common">Chicken</name>
    <dbReference type="NCBI Taxonomy" id="9031"/>
    <lineage>
        <taxon>Eukaryota</taxon>
        <taxon>Metazoa</taxon>
        <taxon>Chordata</taxon>
        <taxon>Craniata</taxon>
        <taxon>Vertebrata</taxon>
        <taxon>Euteleostomi</taxon>
        <taxon>Archelosauria</taxon>
        <taxon>Archosauria</taxon>
        <taxon>Dinosauria</taxon>
        <taxon>Saurischia</taxon>
        <taxon>Theropoda</taxon>
        <taxon>Coelurosauria</taxon>
        <taxon>Aves</taxon>
        <taxon>Neognathae</taxon>
        <taxon>Galloanserae</taxon>
        <taxon>Galliformes</taxon>
        <taxon>Phasianidae</taxon>
        <taxon>Phasianinae</taxon>
        <taxon>Gallus</taxon>
    </lineage>
</organism>
<accession>Q6GXJ1</accession>
<accession>Q0PXU4</accession>
<accession>Q6QLR0</accession>
<keyword id="KW-0044">Antibiotic</keyword>
<keyword id="KW-0929">Antimicrobial</keyword>
<keyword id="KW-0211">Defensin</keyword>
<keyword id="KW-1015">Disulfide bond</keyword>
<keyword id="KW-1185">Reference proteome</keyword>
<keyword id="KW-0964">Secreted</keyword>
<keyword id="KW-0732">Signal</keyword>
<evidence type="ECO:0000250" key="1"/>
<evidence type="ECO:0000255" key="2"/>
<evidence type="ECO:0000269" key="3">
    <source>
    </source>
</evidence>
<evidence type="ECO:0000269" key="4">
    <source>
    </source>
</evidence>
<evidence type="ECO:0000269" key="5">
    <source>
    </source>
</evidence>
<evidence type="ECO:0000269" key="6">
    <source>
    </source>
</evidence>
<evidence type="ECO:0000269" key="7">
    <source ref="3"/>
</evidence>
<evidence type="ECO:0000305" key="8"/>